<accession>O84808</accession>
<organism>
    <name type="scientific">Chlamydia trachomatis serovar D (strain ATCC VR-885 / DSM 19411 / UW-3/Cx)</name>
    <dbReference type="NCBI Taxonomy" id="272561"/>
    <lineage>
        <taxon>Bacteria</taxon>
        <taxon>Pseudomonadati</taxon>
        <taxon>Chlamydiota</taxon>
        <taxon>Chlamydiia</taxon>
        <taxon>Chlamydiales</taxon>
        <taxon>Chlamydiaceae</taxon>
        <taxon>Chlamydia/Chlamydophila group</taxon>
        <taxon>Chlamydia</taxon>
    </lineage>
</organism>
<comment type="function">
    <text evidence="1">Binds as a heterodimer with protein bS6 to the central domain of the 16S rRNA, where it helps stabilize the platform of the 30S subunit.</text>
</comment>
<comment type="subunit">
    <text evidence="1">Part of the 30S ribosomal subunit. Forms a tight heterodimer with protein bS6.</text>
</comment>
<comment type="similarity">
    <text evidence="1">Belongs to the bacterial ribosomal protein bS18 family.</text>
</comment>
<keyword id="KW-1185">Reference proteome</keyword>
<keyword id="KW-0687">Ribonucleoprotein</keyword>
<keyword id="KW-0689">Ribosomal protein</keyword>
<keyword id="KW-0694">RNA-binding</keyword>
<keyword id="KW-0699">rRNA-binding</keyword>
<protein>
    <recommendedName>
        <fullName evidence="1">Small ribosomal subunit protein bS18</fullName>
    </recommendedName>
    <alternativeName>
        <fullName evidence="2">30S ribosomal protein S18</fullName>
    </alternativeName>
</protein>
<gene>
    <name evidence="1" type="primary">rpsR</name>
    <name type="synonym">rs18</name>
    <name type="ordered locus">CT_802</name>
</gene>
<reference key="1">
    <citation type="journal article" date="1998" name="Science">
        <title>Genome sequence of an obligate intracellular pathogen of humans: Chlamydia trachomatis.</title>
        <authorList>
            <person name="Stephens R.S."/>
            <person name="Kalman S."/>
            <person name="Lammel C.J."/>
            <person name="Fan J."/>
            <person name="Marathe R."/>
            <person name="Aravind L."/>
            <person name="Mitchell W.P."/>
            <person name="Olinger L."/>
            <person name="Tatusov R.L."/>
            <person name="Zhao Q."/>
            <person name="Koonin E.V."/>
            <person name="Davis R.W."/>
        </authorList>
    </citation>
    <scope>NUCLEOTIDE SEQUENCE [LARGE SCALE GENOMIC DNA]</scope>
    <source>
        <strain>ATCC VR-885 / DSM 19411 / UW-3/Cx</strain>
    </source>
</reference>
<evidence type="ECO:0000255" key="1">
    <source>
        <dbReference type="HAMAP-Rule" id="MF_00270"/>
    </source>
</evidence>
<evidence type="ECO:0000305" key="2"/>
<feature type="chain" id="PRO_0000111142" description="Small ribosomal subunit protein bS18">
    <location>
        <begin position="1"/>
        <end position="81"/>
    </location>
</feature>
<sequence>MNRPVHNEHRRKRFAKKCPFVSAGWKTIDYKDVTTLKRFITERGKILPRRITGVSSRFQALLAQAVKRARHVGLLPFVGED</sequence>
<name>RS18_CHLTR</name>
<proteinExistence type="inferred from homology"/>
<dbReference type="EMBL" id="AE001273">
    <property type="protein sequence ID" value="AAC68397.1"/>
    <property type="molecule type" value="Genomic_DNA"/>
</dbReference>
<dbReference type="PIR" id="H71469">
    <property type="entry name" value="H71469"/>
</dbReference>
<dbReference type="RefSeq" id="NP_220322.1">
    <property type="nucleotide sequence ID" value="NC_000117.1"/>
</dbReference>
<dbReference type="RefSeq" id="WP_009872184.1">
    <property type="nucleotide sequence ID" value="NC_000117.1"/>
</dbReference>
<dbReference type="SMR" id="O84808"/>
<dbReference type="FunCoup" id="O84808">
    <property type="interactions" value="246"/>
</dbReference>
<dbReference type="STRING" id="272561.CT_802"/>
<dbReference type="EnsemblBacteria" id="AAC68397">
    <property type="protein sequence ID" value="AAC68397"/>
    <property type="gene ID" value="CT_802"/>
</dbReference>
<dbReference type="GeneID" id="884602"/>
<dbReference type="KEGG" id="ctr:CT_802"/>
<dbReference type="PATRIC" id="fig|272561.5.peg.883"/>
<dbReference type="HOGENOM" id="CLU_148710_2_2_0"/>
<dbReference type="InParanoid" id="O84808"/>
<dbReference type="OrthoDB" id="9812008at2"/>
<dbReference type="Proteomes" id="UP000000431">
    <property type="component" value="Chromosome"/>
</dbReference>
<dbReference type="GO" id="GO:0022627">
    <property type="term" value="C:cytosolic small ribosomal subunit"/>
    <property type="evidence" value="ECO:0000318"/>
    <property type="project" value="GO_Central"/>
</dbReference>
<dbReference type="GO" id="GO:0070181">
    <property type="term" value="F:small ribosomal subunit rRNA binding"/>
    <property type="evidence" value="ECO:0000318"/>
    <property type="project" value="GO_Central"/>
</dbReference>
<dbReference type="GO" id="GO:0003735">
    <property type="term" value="F:structural constituent of ribosome"/>
    <property type="evidence" value="ECO:0000318"/>
    <property type="project" value="GO_Central"/>
</dbReference>
<dbReference type="GO" id="GO:0006412">
    <property type="term" value="P:translation"/>
    <property type="evidence" value="ECO:0000318"/>
    <property type="project" value="GO_Central"/>
</dbReference>
<dbReference type="FunFam" id="4.10.640.10:FF:000004">
    <property type="entry name" value="30S ribosomal protein S18"/>
    <property type="match status" value="1"/>
</dbReference>
<dbReference type="Gene3D" id="4.10.640.10">
    <property type="entry name" value="Ribosomal protein S18"/>
    <property type="match status" value="1"/>
</dbReference>
<dbReference type="HAMAP" id="MF_00270">
    <property type="entry name" value="Ribosomal_bS18"/>
    <property type="match status" value="1"/>
</dbReference>
<dbReference type="InterPro" id="IPR001648">
    <property type="entry name" value="Ribosomal_bS18"/>
</dbReference>
<dbReference type="InterPro" id="IPR018275">
    <property type="entry name" value="Ribosomal_bS18_CS"/>
</dbReference>
<dbReference type="InterPro" id="IPR036870">
    <property type="entry name" value="Ribosomal_bS18_sf"/>
</dbReference>
<dbReference type="NCBIfam" id="TIGR00165">
    <property type="entry name" value="S18"/>
    <property type="match status" value="1"/>
</dbReference>
<dbReference type="PANTHER" id="PTHR13479">
    <property type="entry name" value="30S RIBOSOMAL PROTEIN S18"/>
    <property type="match status" value="1"/>
</dbReference>
<dbReference type="PANTHER" id="PTHR13479:SF40">
    <property type="entry name" value="SMALL RIBOSOMAL SUBUNIT PROTEIN BS18M"/>
    <property type="match status" value="1"/>
</dbReference>
<dbReference type="Pfam" id="PF01084">
    <property type="entry name" value="Ribosomal_S18"/>
    <property type="match status" value="1"/>
</dbReference>
<dbReference type="PRINTS" id="PR00974">
    <property type="entry name" value="RIBOSOMALS18"/>
</dbReference>
<dbReference type="SUPFAM" id="SSF46911">
    <property type="entry name" value="Ribosomal protein S18"/>
    <property type="match status" value="1"/>
</dbReference>
<dbReference type="PROSITE" id="PS00057">
    <property type="entry name" value="RIBOSOMAL_S18"/>
    <property type="match status" value="1"/>
</dbReference>